<sequence length="169" mass="19540">MERAIFAGGCFWCMVQPFEEQAGILSVRSGYTGGHLPNPSYEQVCAKTTGHTEAVEIIFDPEEISYKELVELYWVQTDPTDAFGQFEDRGDNYRPVIYYTTERQKEIAEQSKANLQASGRFDQPIVTTIEPAEPFYLAEDYHQGFYKKNPRRYAQSSAIRHQFLEENWS</sequence>
<name>MSRA_STRPM</name>
<evidence type="ECO:0000255" key="1">
    <source>
        <dbReference type="HAMAP-Rule" id="MF_01401"/>
    </source>
</evidence>
<dbReference type="EC" id="1.8.4.11" evidence="1"/>
<dbReference type="EMBL" id="CP000056">
    <property type="protein sequence ID" value="AAX71482.1"/>
    <property type="molecule type" value="Genomic_DNA"/>
</dbReference>
<dbReference type="RefSeq" id="WP_011284570.1">
    <property type="nucleotide sequence ID" value="NC_007296.2"/>
</dbReference>
<dbReference type="SMR" id="Q48UX4"/>
<dbReference type="KEGG" id="spb:M28_Spy0368"/>
<dbReference type="HOGENOM" id="CLU_031040_10_1_9"/>
<dbReference type="GO" id="GO:0033744">
    <property type="term" value="F:L-methionine:thioredoxin-disulfide S-oxidoreductase activity"/>
    <property type="evidence" value="ECO:0007669"/>
    <property type="project" value="RHEA"/>
</dbReference>
<dbReference type="GO" id="GO:0008113">
    <property type="term" value="F:peptide-methionine (S)-S-oxide reductase activity"/>
    <property type="evidence" value="ECO:0007669"/>
    <property type="project" value="UniProtKB-UniRule"/>
</dbReference>
<dbReference type="GO" id="GO:0036211">
    <property type="term" value="P:protein modification process"/>
    <property type="evidence" value="ECO:0007669"/>
    <property type="project" value="UniProtKB-UniRule"/>
</dbReference>
<dbReference type="Gene3D" id="3.30.1060.10">
    <property type="entry name" value="Peptide methionine sulphoxide reductase MsrA"/>
    <property type="match status" value="1"/>
</dbReference>
<dbReference type="HAMAP" id="MF_01401">
    <property type="entry name" value="MsrA"/>
    <property type="match status" value="1"/>
</dbReference>
<dbReference type="InterPro" id="IPR002569">
    <property type="entry name" value="Met_Sox_Rdtase_MsrA_dom"/>
</dbReference>
<dbReference type="InterPro" id="IPR036509">
    <property type="entry name" value="Met_Sox_Rdtase_MsrA_sf"/>
</dbReference>
<dbReference type="NCBIfam" id="TIGR00401">
    <property type="entry name" value="msrA"/>
    <property type="match status" value="1"/>
</dbReference>
<dbReference type="PANTHER" id="PTHR43774">
    <property type="entry name" value="PEPTIDE METHIONINE SULFOXIDE REDUCTASE"/>
    <property type="match status" value="1"/>
</dbReference>
<dbReference type="PANTHER" id="PTHR43774:SF1">
    <property type="entry name" value="PEPTIDE METHIONINE SULFOXIDE REDUCTASE MSRA 2"/>
    <property type="match status" value="1"/>
</dbReference>
<dbReference type="Pfam" id="PF01625">
    <property type="entry name" value="PMSR"/>
    <property type="match status" value="1"/>
</dbReference>
<dbReference type="SUPFAM" id="SSF55068">
    <property type="entry name" value="Peptide methionine sulfoxide reductase"/>
    <property type="match status" value="1"/>
</dbReference>
<feature type="chain" id="PRO_1000068369" description="Peptide methionine sulfoxide reductase MsrA">
    <location>
        <begin position="1"/>
        <end position="169"/>
    </location>
</feature>
<feature type="active site" evidence="1">
    <location>
        <position position="10"/>
    </location>
</feature>
<proteinExistence type="inferred from homology"/>
<comment type="function">
    <text evidence="1">Has an important function as a repair enzyme for proteins that have been inactivated by oxidation. Catalyzes the reversible oxidation-reduction of methionine sulfoxide in proteins to methionine.</text>
</comment>
<comment type="catalytic activity">
    <reaction evidence="1">
        <text>L-methionyl-[protein] + [thioredoxin]-disulfide + H2O = L-methionyl-(S)-S-oxide-[protein] + [thioredoxin]-dithiol</text>
        <dbReference type="Rhea" id="RHEA:14217"/>
        <dbReference type="Rhea" id="RHEA-COMP:10698"/>
        <dbReference type="Rhea" id="RHEA-COMP:10700"/>
        <dbReference type="Rhea" id="RHEA-COMP:12313"/>
        <dbReference type="Rhea" id="RHEA-COMP:12315"/>
        <dbReference type="ChEBI" id="CHEBI:15377"/>
        <dbReference type="ChEBI" id="CHEBI:16044"/>
        <dbReference type="ChEBI" id="CHEBI:29950"/>
        <dbReference type="ChEBI" id="CHEBI:44120"/>
        <dbReference type="ChEBI" id="CHEBI:50058"/>
        <dbReference type="EC" id="1.8.4.11"/>
    </reaction>
</comment>
<comment type="catalytic activity">
    <reaction evidence="1">
        <text>[thioredoxin]-disulfide + L-methionine + H2O = L-methionine (S)-S-oxide + [thioredoxin]-dithiol</text>
        <dbReference type="Rhea" id="RHEA:19993"/>
        <dbReference type="Rhea" id="RHEA-COMP:10698"/>
        <dbReference type="Rhea" id="RHEA-COMP:10700"/>
        <dbReference type="ChEBI" id="CHEBI:15377"/>
        <dbReference type="ChEBI" id="CHEBI:29950"/>
        <dbReference type="ChEBI" id="CHEBI:50058"/>
        <dbReference type="ChEBI" id="CHEBI:57844"/>
        <dbReference type="ChEBI" id="CHEBI:58772"/>
        <dbReference type="EC" id="1.8.4.11"/>
    </reaction>
</comment>
<comment type="similarity">
    <text evidence="1">Belongs to the MsrA Met sulfoxide reductase family.</text>
</comment>
<organism>
    <name type="scientific">Streptococcus pyogenes serotype M28 (strain MGAS6180)</name>
    <dbReference type="NCBI Taxonomy" id="319701"/>
    <lineage>
        <taxon>Bacteria</taxon>
        <taxon>Bacillati</taxon>
        <taxon>Bacillota</taxon>
        <taxon>Bacilli</taxon>
        <taxon>Lactobacillales</taxon>
        <taxon>Streptococcaceae</taxon>
        <taxon>Streptococcus</taxon>
    </lineage>
</organism>
<gene>
    <name evidence="1" type="primary">msrA</name>
    <name type="ordered locus">M28_Spy0368</name>
</gene>
<protein>
    <recommendedName>
        <fullName evidence="1">Peptide methionine sulfoxide reductase MsrA</fullName>
        <shortName evidence="1">Protein-methionine-S-oxide reductase</shortName>
        <ecNumber evidence="1">1.8.4.11</ecNumber>
    </recommendedName>
    <alternativeName>
        <fullName evidence="1">Peptide-methionine (S)-S-oxide reductase</fullName>
        <shortName evidence="1">Peptide Met(O) reductase</shortName>
    </alternativeName>
</protein>
<keyword id="KW-0560">Oxidoreductase</keyword>
<reference key="1">
    <citation type="journal article" date="2005" name="J. Infect. Dis.">
        <title>Genome sequence of a serotype M28 strain of group A Streptococcus: potential new insights into puerperal sepsis and bacterial disease specificity.</title>
        <authorList>
            <person name="Green N.M."/>
            <person name="Zhang S."/>
            <person name="Porcella S.F."/>
            <person name="Nagiec M.J."/>
            <person name="Barbian K.D."/>
            <person name="Beres S.B."/>
            <person name="Lefebvre R.B."/>
            <person name="Musser J.M."/>
        </authorList>
    </citation>
    <scope>NUCLEOTIDE SEQUENCE [LARGE SCALE GENOMIC DNA]</scope>
    <source>
        <strain>MGAS6180</strain>
    </source>
</reference>
<accession>Q48UX4</accession>